<dbReference type="EMBL" id="AB006704">
    <property type="protein sequence ID" value="BAB08694.1"/>
    <property type="molecule type" value="Genomic_DNA"/>
</dbReference>
<dbReference type="EMBL" id="CP002688">
    <property type="protein sequence ID" value="AED91926.1"/>
    <property type="molecule type" value="Genomic_DNA"/>
</dbReference>
<dbReference type="EMBL" id="AY084424">
    <property type="protein sequence ID" value="AAM60998.1"/>
    <property type="molecule type" value="mRNA"/>
</dbReference>
<dbReference type="EMBL" id="BT003898">
    <property type="protein sequence ID" value="AAO41946.1"/>
    <property type="molecule type" value="mRNA"/>
</dbReference>
<dbReference type="RefSeq" id="NP_196871.1">
    <property type="nucleotide sequence ID" value="NM_121370.3"/>
</dbReference>
<dbReference type="SMR" id="Q9FNA5"/>
<dbReference type="PaxDb" id="3702-AT5G13670.1"/>
<dbReference type="EnsemblPlants" id="AT5G13670.1">
    <property type="protein sequence ID" value="AT5G13670.1"/>
    <property type="gene ID" value="AT5G13670"/>
</dbReference>
<dbReference type="GeneID" id="831212"/>
<dbReference type="Gramene" id="AT5G13670.1">
    <property type="protein sequence ID" value="AT5G13670.1"/>
    <property type="gene ID" value="AT5G13670"/>
</dbReference>
<dbReference type="KEGG" id="ath:AT5G13670"/>
<dbReference type="Araport" id="AT5G13670"/>
<dbReference type="TAIR" id="AT5G13670">
    <property type="gene designation" value="UMAMIT15"/>
</dbReference>
<dbReference type="eggNOG" id="ENOG502SHYN">
    <property type="taxonomic scope" value="Eukaryota"/>
</dbReference>
<dbReference type="HOGENOM" id="CLU_025359_1_1_1"/>
<dbReference type="InParanoid" id="Q9FNA5"/>
<dbReference type="OMA" id="YVIGWAS"/>
<dbReference type="OrthoDB" id="1728340at2759"/>
<dbReference type="PhylomeDB" id="Q9FNA5"/>
<dbReference type="PRO" id="PR:Q9FNA5"/>
<dbReference type="Proteomes" id="UP000006548">
    <property type="component" value="Chromosome 5"/>
</dbReference>
<dbReference type="ExpressionAtlas" id="Q9FNA5">
    <property type="expression patterns" value="baseline and differential"/>
</dbReference>
<dbReference type="GO" id="GO:0016020">
    <property type="term" value="C:membrane"/>
    <property type="evidence" value="ECO:0007669"/>
    <property type="project" value="UniProtKB-SubCell"/>
</dbReference>
<dbReference type="GO" id="GO:0022857">
    <property type="term" value="F:transmembrane transporter activity"/>
    <property type="evidence" value="ECO:0007669"/>
    <property type="project" value="InterPro"/>
</dbReference>
<dbReference type="InterPro" id="IPR000620">
    <property type="entry name" value="EamA_dom"/>
</dbReference>
<dbReference type="InterPro" id="IPR030184">
    <property type="entry name" value="WAT1-related"/>
</dbReference>
<dbReference type="PANTHER" id="PTHR31218">
    <property type="entry name" value="WAT1-RELATED PROTEIN"/>
    <property type="match status" value="1"/>
</dbReference>
<dbReference type="Pfam" id="PF00892">
    <property type="entry name" value="EamA"/>
    <property type="match status" value="2"/>
</dbReference>
<dbReference type="SUPFAM" id="SSF103481">
    <property type="entry name" value="Multidrug resistance efflux transporter EmrE"/>
    <property type="match status" value="2"/>
</dbReference>
<comment type="subcellular location">
    <subcellularLocation>
        <location evidence="1">Membrane</location>
        <topology evidence="3">Multi-pass membrane protein</topology>
    </subcellularLocation>
</comment>
<comment type="similarity">
    <text evidence="3">Belongs to the drug/metabolite transporter (DMT) superfamily. Plant drug/metabolite exporter (P-DME) (TC 2.A.7.4) family.</text>
</comment>
<protein>
    <recommendedName>
        <fullName>WAT1-related protein At5g13670</fullName>
    </recommendedName>
</protein>
<sequence length="377" mass="41469">MKFERARPFIAIVFIQCLYALMSIVAKLALNKGMSPHVLVAYRMAVASALITPFALILERNTRPKLTFKILLQIAILSLFEPVVEQNLYYSGMKLTTATFTSALCNALPAMTFIMACVFKLEKVTIERRHSQAKLVGTMVAIGGAMLMTFVKGNVIELPWTSNSRGLNGHTHAMRIPKQADIARGSIMLVASCFSWSCYIILQAKILAQYKAELSLTALMCIMGMLEATVMGLIWERKNMSVWKINPDVTLLASIYGGLVSGLAYYVIGWASKERGPVFVSAFNPLSMVLVAILSTFVFLEKVYVGRVIGSVVIVIGIYLVLWGKSKDKGGMLQPNAGCAETVVKIDQQKVPTPDNNQVVSISYHLMIPKAAARSQE</sequence>
<feature type="chain" id="PRO_0000421346" description="WAT1-related protein At5g13670">
    <location>
        <begin position="1"/>
        <end position="377"/>
    </location>
</feature>
<feature type="transmembrane region" description="Helical" evidence="2">
    <location>
        <begin position="9"/>
        <end position="29"/>
    </location>
</feature>
<feature type="transmembrane region" description="Helical" evidence="2">
    <location>
        <begin position="38"/>
        <end position="58"/>
    </location>
</feature>
<feature type="transmembrane region" description="Helical" evidence="2">
    <location>
        <begin position="64"/>
        <end position="84"/>
    </location>
</feature>
<feature type="transmembrane region" description="Helical" evidence="2">
    <location>
        <begin position="99"/>
        <end position="119"/>
    </location>
</feature>
<feature type="transmembrane region" description="Helical" evidence="2">
    <location>
        <begin position="136"/>
        <end position="156"/>
    </location>
</feature>
<feature type="transmembrane region" description="Helical" evidence="2">
    <location>
        <begin position="187"/>
        <end position="207"/>
    </location>
</feature>
<feature type="transmembrane region" description="Helical" evidence="2">
    <location>
        <begin position="214"/>
        <end position="234"/>
    </location>
</feature>
<feature type="transmembrane region" description="Helical" evidence="2">
    <location>
        <begin position="251"/>
        <end position="271"/>
    </location>
</feature>
<feature type="transmembrane region" description="Helical" evidence="2">
    <location>
        <begin position="279"/>
        <end position="299"/>
    </location>
</feature>
<feature type="transmembrane region" description="Helical" evidence="2">
    <location>
        <begin position="303"/>
        <end position="323"/>
    </location>
</feature>
<feature type="domain" description="EamA 1">
    <location>
        <begin position="18"/>
        <end position="149"/>
    </location>
</feature>
<feature type="domain" description="EamA 2">
    <location>
        <begin position="194"/>
        <end position="322"/>
    </location>
</feature>
<organism>
    <name type="scientific">Arabidopsis thaliana</name>
    <name type="common">Mouse-ear cress</name>
    <dbReference type="NCBI Taxonomy" id="3702"/>
    <lineage>
        <taxon>Eukaryota</taxon>
        <taxon>Viridiplantae</taxon>
        <taxon>Streptophyta</taxon>
        <taxon>Embryophyta</taxon>
        <taxon>Tracheophyta</taxon>
        <taxon>Spermatophyta</taxon>
        <taxon>Magnoliopsida</taxon>
        <taxon>eudicotyledons</taxon>
        <taxon>Gunneridae</taxon>
        <taxon>Pentapetalae</taxon>
        <taxon>rosids</taxon>
        <taxon>malvids</taxon>
        <taxon>Brassicales</taxon>
        <taxon>Brassicaceae</taxon>
        <taxon>Camelineae</taxon>
        <taxon>Arabidopsis</taxon>
    </lineage>
</organism>
<accession>Q9FNA5</accession>
<accession>Q84WF1</accession>
<gene>
    <name type="ordered locus">At5g13670</name>
    <name type="ORF">MSH12.14</name>
</gene>
<name>WTR39_ARATH</name>
<proteinExistence type="evidence at transcript level"/>
<keyword id="KW-0472">Membrane</keyword>
<keyword id="KW-1185">Reference proteome</keyword>
<keyword id="KW-0677">Repeat</keyword>
<keyword id="KW-0812">Transmembrane</keyword>
<keyword id="KW-1133">Transmembrane helix</keyword>
<reference key="1">
    <citation type="journal article" date="1997" name="DNA Res.">
        <title>Structural analysis of Arabidopsis thaliana chromosome 5. II. Sequence features of the regions of 1,044,062 bp covered by thirteen physically assigned P1 clones.</title>
        <authorList>
            <person name="Kotani H."/>
            <person name="Nakamura Y."/>
            <person name="Sato S."/>
            <person name="Kaneko T."/>
            <person name="Asamizu E."/>
            <person name="Miyajima N."/>
            <person name="Tabata S."/>
        </authorList>
    </citation>
    <scope>NUCLEOTIDE SEQUENCE [LARGE SCALE GENOMIC DNA]</scope>
    <source>
        <strain>cv. Columbia</strain>
    </source>
</reference>
<reference key="2">
    <citation type="journal article" date="2017" name="Plant J.">
        <title>Araport11: a complete reannotation of the Arabidopsis thaliana reference genome.</title>
        <authorList>
            <person name="Cheng C.Y."/>
            <person name="Krishnakumar V."/>
            <person name="Chan A.P."/>
            <person name="Thibaud-Nissen F."/>
            <person name="Schobel S."/>
            <person name="Town C.D."/>
        </authorList>
    </citation>
    <scope>GENOME REANNOTATION</scope>
    <source>
        <strain>cv. Columbia</strain>
    </source>
</reference>
<reference key="3">
    <citation type="submission" date="2002-03" db="EMBL/GenBank/DDBJ databases">
        <title>Full-length cDNA from Arabidopsis thaliana.</title>
        <authorList>
            <person name="Brover V.V."/>
            <person name="Troukhan M.E."/>
            <person name="Alexandrov N.A."/>
            <person name="Lu Y.-P."/>
            <person name="Flavell R.B."/>
            <person name="Feldmann K.A."/>
        </authorList>
    </citation>
    <scope>NUCLEOTIDE SEQUENCE [LARGE SCALE MRNA]</scope>
</reference>
<reference key="4">
    <citation type="journal article" date="2003" name="Science">
        <title>Empirical analysis of transcriptional activity in the Arabidopsis genome.</title>
        <authorList>
            <person name="Yamada K."/>
            <person name="Lim J."/>
            <person name="Dale J.M."/>
            <person name="Chen H."/>
            <person name="Shinn P."/>
            <person name="Palm C.J."/>
            <person name="Southwick A.M."/>
            <person name="Wu H.C."/>
            <person name="Kim C.J."/>
            <person name="Nguyen M."/>
            <person name="Pham P.K."/>
            <person name="Cheuk R.F."/>
            <person name="Karlin-Newmann G."/>
            <person name="Liu S.X."/>
            <person name="Lam B."/>
            <person name="Sakano H."/>
            <person name="Wu T."/>
            <person name="Yu G."/>
            <person name="Miranda M."/>
            <person name="Quach H.L."/>
            <person name="Tripp M."/>
            <person name="Chang C.H."/>
            <person name="Lee J.M."/>
            <person name="Toriumi M.J."/>
            <person name="Chan M.M."/>
            <person name="Tang C.C."/>
            <person name="Onodera C.S."/>
            <person name="Deng J.M."/>
            <person name="Akiyama K."/>
            <person name="Ansari Y."/>
            <person name="Arakawa T."/>
            <person name="Banh J."/>
            <person name="Banno F."/>
            <person name="Bowser L."/>
            <person name="Brooks S.Y."/>
            <person name="Carninci P."/>
            <person name="Chao Q."/>
            <person name="Choy N."/>
            <person name="Enju A."/>
            <person name="Goldsmith A.D."/>
            <person name="Gurjal M."/>
            <person name="Hansen N.F."/>
            <person name="Hayashizaki Y."/>
            <person name="Johnson-Hopson C."/>
            <person name="Hsuan V.W."/>
            <person name="Iida K."/>
            <person name="Karnes M."/>
            <person name="Khan S."/>
            <person name="Koesema E."/>
            <person name="Ishida J."/>
            <person name="Jiang P.X."/>
            <person name="Jones T."/>
            <person name="Kawai J."/>
            <person name="Kamiya A."/>
            <person name="Meyers C."/>
            <person name="Nakajima M."/>
            <person name="Narusaka M."/>
            <person name="Seki M."/>
            <person name="Sakurai T."/>
            <person name="Satou M."/>
            <person name="Tamse R."/>
            <person name="Vaysberg M."/>
            <person name="Wallender E.K."/>
            <person name="Wong C."/>
            <person name="Yamamura Y."/>
            <person name="Yuan S."/>
            <person name="Shinozaki K."/>
            <person name="Davis R.W."/>
            <person name="Theologis A."/>
            <person name="Ecker J.R."/>
        </authorList>
    </citation>
    <scope>NUCLEOTIDE SEQUENCE [LARGE SCALE MRNA] OF 60-377</scope>
    <source>
        <strain>cv. Columbia</strain>
    </source>
</reference>
<evidence type="ECO:0000250" key="1"/>
<evidence type="ECO:0000255" key="2"/>
<evidence type="ECO:0000305" key="3"/>